<evidence type="ECO:0000255" key="1">
    <source>
        <dbReference type="HAMAP-Rule" id="MF_00394"/>
    </source>
</evidence>
<reference key="1">
    <citation type="journal article" date="2010" name="J. Bacteriol.">
        <title>Whole genome sequences of two Xylella fastidiosa strains (M12 and M23) causing almond leaf scorch disease in California.</title>
        <authorList>
            <person name="Chen J."/>
            <person name="Xie G."/>
            <person name="Han S."/>
            <person name="Chertkov O."/>
            <person name="Sims D."/>
            <person name="Civerolo E.L."/>
        </authorList>
    </citation>
    <scope>NUCLEOTIDE SEQUENCE [LARGE SCALE GENOMIC DNA]</scope>
    <source>
        <strain>M23</strain>
    </source>
</reference>
<feature type="chain" id="PRO_1000123204" description="Glycerol-3-phosphate dehydrogenase [NAD(P)+]">
    <location>
        <begin position="1"/>
        <end position="346"/>
    </location>
</feature>
<feature type="active site" description="Proton acceptor" evidence="1">
    <location>
        <position position="194"/>
    </location>
</feature>
<feature type="binding site" evidence="1">
    <location>
        <position position="15"/>
    </location>
    <ligand>
        <name>NADPH</name>
        <dbReference type="ChEBI" id="CHEBI:57783"/>
    </ligand>
</feature>
<feature type="binding site" evidence="1">
    <location>
        <position position="16"/>
    </location>
    <ligand>
        <name>NADPH</name>
        <dbReference type="ChEBI" id="CHEBI:57783"/>
    </ligand>
</feature>
<feature type="binding site" evidence="1">
    <location>
        <position position="36"/>
    </location>
    <ligand>
        <name>NADPH</name>
        <dbReference type="ChEBI" id="CHEBI:57783"/>
    </ligand>
</feature>
<feature type="binding site" evidence="1">
    <location>
        <position position="110"/>
    </location>
    <ligand>
        <name>NADPH</name>
        <dbReference type="ChEBI" id="CHEBI:57783"/>
    </ligand>
</feature>
<feature type="binding site" evidence="1">
    <location>
        <position position="110"/>
    </location>
    <ligand>
        <name>sn-glycerol 3-phosphate</name>
        <dbReference type="ChEBI" id="CHEBI:57597"/>
    </ligand>
</feature>
<feature type="binding site" evidence="1">
    <location>
        <position position="139"/>
    </location>
    <ligand>
        <name>sn-glycerol 3-phosphate</name>
        <dbReference type="ChEBI" id="CHEBI:57597"/>
    </ligand>
</feature>
<feature type="binding site" evidence="1">
    <location>
        <position position="141"/>
    </location>
    <ligand>
        <name>sn-glycerol 3-phosphate</name>
        <dbReference type="ChEBI" id="CHEBI:57597"/>
    </ligand>
</feature>
<feature type="binding site" evidence="1">
    <location>
        <position position="143"/>
    </location>
    <ligand>
        <name>NADPH</name>
        <dbReference type="ChEBI" id="CHEBI:57783"/>
    </ligand>
</feature>
<feature type="binding site" evidence="1">
    <location>
        <position position="194"/>
    </location>
    <ligand>
        <name>sn-glycerol 3-phosphate</name>
        <dbReference type="ChEBI" id="CHEBI:57597"/>
    </ligand>
</feature>
<feature type="binding site" evidence="1">
    <location>
        <position position="247"/>
    </location>
    <ligand>
        <name>sn-glycerol 3-phosphate</name>
        <dbReference type="ChEBI" id="CHEBI:57597"/>
    </ligand>
</feature>
<feature type="binding site" evidence="1">
    <location>
        <position position="257"/>
    </location>
    <ligand>
        <name>sn-glycerol 3-phosphate</name>
        <dbReference type="ChEBI" id="CHEBI:57597"/>
    </ligand>
</feature>
<feature type="binding site" evidence="1">
    <location>
        <position position="258"/>
    </location>
    <ligand>
        <name>NADPH</name>
        <dbReference type="ChEBI" id="CHEBI:57783"/>
    </ligand>
</feature>
<feature type="binding site" evidence="1">
    <location>
        <position position="258"/>
    </location>
    <ligand>
        <name>sn-glycerol 3-phosphate</name>
        <dbReference type="ChEBI" id="CHEBI:57597"/>
    </ligand>
</feature>
<feature type="binding site" evidence="1">
    <location>
        <position position="259"/>
    </location>
    <ligand>
        <name>sn-glycerol 3-phosphate</name>
        <dbReference type="ChEBI" id="CHEBI:57597"/>
    </ligand>
</feature>
<feature type="binding site" evidence="1">
    <location>
        <position position="282"/>
    </location>
    <ligand>
        <name>NADPH</name>
        <dbReference type="ChEBI" id="CHEBI:57783"/>
    </ligand>
</feature>
<feature type="binding site" evidence="1">
    <location>
        <position position="284"/>
    </location>
    <ligand>
        <name>NADPH</name>
        <dbReference type="ChEBI" id="CHEBI:57783"/>
    </ligand>
</feature>
<comment type="function">
    <text evidence="1">Catalyzes the reduction of the glycolytic intermediate dihydroxyacetone phosphate (DHAP) to sn-glycerol 3-phosphate (G3P), the key precursor for phospholipid synthesis.</text>
</comment>
<comment type="catalytic activity">
    <reaction evidence="1">
        <text>sn-glycerol 3-phosphate + NAD(+) = dihydroxyacetone phosphate + NADH + H(+)</text>
        <dbReference type="Rhea" id="RHEA:11092"/>
        <dbReference type="ChEBI" id="CHEBI:15378"/>
        <dbReference type="ChEBI" id="CHEBI:57540"/>
        <dbReference type="ChEBI" id="CHEBI:57597"/>
        <dbReference type="ChEBI" id="CHEBI:57642"/>
        <dbReference type="ChEBI" id="CHEBI:57945"/>
        <dbReference type="EC" id="1.1.1.94"/>
    </reaction>
    <physiologicalReaction direction="right-to-left" evidence="1">
        <dbReference type="Rhea" id="RHEA:11094"/>
    </physiologicalReaction>
</comment>
<comment type="catalytic activity">
    <reaction evidence="1">
        <text>sn-glycerol 3-phosphate + NADP(+) = dihydroxyacetone phosphate + NADPH + H(+)</text>
        <dbReference type="Rhea" id="RHEA:11096"/>
        <dbReference type="ChEBI" id="CHEBI:15378"/>
        <dbReference type="ChEBI" id="CHEBI:57597"/>
        <dbReference type="ChEBI" id="CHEBI:57642"/>
        <dbReference type="ChEBI" id="CHEBI:57783"/>
        <dbReference type="ChEBI" id="CHEBI:58349"/>
        <dbReference type="EC" id="1.1.1.94"/>
    </reaction>
    <physiologicalReaction direction="right-to-left" evidence="1">
        <dbReference type="Rhea" id="RHEA:11098"/>
    </physiologicalReaction>
</comment>
<comment type="pathway">
    <text evidence="1">Membrane lipid metabolism; glycerophospholipid metabolism.</text>
</comment>
<comment type="subcellular location">
    <subcellularLocation>
        <location evidence="1">Cytoplasm</location>
    </subcellularLocation>
</comment>
<comment type="similarity">
    <text evidence="1">Belongs to the NAD-dependent glycerol-3-phosphate dehydrogenase family.</text>
</comment>
<protein>
    <recommendedName>
        <fullName evidence="1">Glycerol-3-phosphate dehydrogenase [NAD(P)+]</fullName>
        <ecNumber evidence="1">1.1.1.94</ecNumber>
    </recommendedName>
    <alternativeName>
        <fullName evidence="1">NAD(P)(+)-dependent glycerol-3-phosphate dehydrogenase</fullName>
    </alternativeName>
    <alternativeName>
        <fullName evidence="1">NAD(P)H-dependent dihydroxyacetone-phosphate reductase</fullName>
    </alternativeName>
</protein>
<proteinExistence type="inferred from homology"/>
<keyword id="KW-0963">Cytoplasm</keyword>
<keyword id="KW-0444">Lipid biosynthesis</keyword>
<keyword id="KW-0443">Lipid metabolism</keyword>
<keyword id="KW-0520">NAD</keyword>
<keyword id="KW-0521">NADP</keyword>
<keyword id="KW-0547">Nucleotide-binding</keyword>
<keyword id="KW-0560">Oxidoreductase</keyword>
<keyword id="KW-0594">Phospholipid biosynthesis</keyword>
<keyword id="KW-1208">Phospholipid metabolism</keyword>
<name>GPDA_XYLF2</name>
<accession>B2I5B4</accession>
<sequence>MINSKQKIAVLGAGSWGTALAALVARHDYPTILWGRDVRVIQSIDIQHQNFRYLPSIMLPQTLRATTDLAAAVSGADWVLVAVPSYAFTETLCRLAPLLSIGVGVAWATKGFEPGSGRFLHEVAREILGGDAPLAVVTGPSFAKEVTLGLPTAVTVHGEDACFTQMVANAMHGPMFRAYTGNDVIGAELGGAMKNVLAVAIGVADGMQLGMNARAGLITRGLNEMLRLSAVIGARPETLMGLAGLGDLVLTCTGDLSRNRRLGFALGRGQSLSDAIREIGQVVESVQTSDEVMRHAEQNGVELPISEAVRAVLREEITPYAGMKVLLAREQKPEYLDILFKANCSL</sequence>
<organism>
    <name type="scientific">Xylella fastidiosa (strain M23)</name>
    <dbReference type="NCBI Taxonomy" id="405441"/>
    <lineage>
        <taxon>Bacteria</taxon>
        <taxon>Pseudomonadati</taxon>
        <taxon>Pseudomonadota</taxon>
        <taxon>Gammaproteobacteria</taxon>
        <taxon>Lysobacterales</taxon>
        <taxon>Lysobacteraceae</taxon>
        <taxon>Xylella</taxon>
    </lineage>
</organism>
<gene>
    <name evidence="1" type="primary">gpsA</name>
    <name type="ordered locus">XfasM23_1129</name>
</gene>
<dbReference type="EC" id="1.1.1.94" evidence="1"/>
<dbReference type="EMBL" id="CP001011">
    <property type="protein sequence ID" value="ACB92557.1"/>
    <property type="molecule type" value="Genomic_DNA"/>
</dbReference>
<dbReference type="RefSeq" id="WP_012382611.1">
    <property type="nucleotide sequence ID" value="NC_010577.1"/>
</dbReference>
<dbReference type="SMR" id="B2I5B4"/>
<dbReference type="KEGG" id="xfn:XfasM23_1129"/>
<dbReference type="HOGENOM" id="CLU_033449_0_2_6"/>
<dbReference type="UniPathway" id="UPA00940"/>
<dbReference type="Proteomes" id="UP000001698">
    <property type="component" value="Chromosome"/>
</dbReference>
<dbReference type="GO" id="GO:0005829">
    <property type="term" value="C:cytosol"/>
    <property type="evidence" value="ECO:0007669"/>
    <property type="project" value="TreeGrafter"/>
</dbReference>
<dbReference type="GO" id="GO:0047952">
    <property type="term" value="F:glycerol-3-phosphate dehydrogenase [NAD(P)+] activity"/>
    <property type="evidence" value="ECO:0007669"/>
    <property type="project" value="UniProtKB-UniRule"/>
</dbReference>
<dbReference type="GO" id="GO:0051287">
    <property type="term" value="F:NAD binding"/>
    <property type="evidence" value="ECO:0007669"/>
    <property type="project" value="InterPro"/>
</dbReference>
<dbReference type="GO" id="GO:0005975">
    <property type="term" value="P:carbohydrate metabolic process"/>
    <property type="evidence" value="ECO:0007669"/>
    <property type="project" value="InterPro"/>
</dbReference>
<dbReference type="GO" id="GO:0046167">
    <property type="term" value="P:glycerol-3-phosphate biosynthetic process"/>
    <property type="evidence" value="ECO:0007669"/>
    <property type="project" value="UniProtKB-UniRule"/>
</dbReference>
<dbReference type="GO" id="GO:0046168">
    <property type="term" value="P:glycerol-3-phosphate catabolic process"/>
    <property type="evidence" value="ECO:0007669"/>
    <property type="project" value="InterPro"/>
</dbReference>
<dbReference type="GO" id="GO:0046474">
    <property type="term" value="P:glycerophospholipid biosynthetic process"/>
    <property type="evidence" value="ECO:0007669"/>
    <property type="project" value="TreeGrafter"/>
</dbReference>
<dbReference type="FunFam" id="1.10.1040.10:FF:000001">
    <property type="entry name" value="Glycerol-3-phosphate dehydrogenase [NAD(P)+]"/>
    <property type="match status" value="1"/>
</dbReference>
<dbReference type="FunFam" id="3.40.50.720:FF:000019">
    <property type="entry name" value="Glycerol-3-phosphate dehydrogenase [NAD(P)+]"/>
    <property type="match status" value="1"/>
</dbReference>
<dbReference type="Gene3D" id="1.10.1040.10">
    <property type="entry name" value="N-(1-d-carboxylethyl)-l-norvaline Dehydrogenase, domain 2"/>
    <property type="match status" value="1"/>
</dbReference>
<dbReference type="Gene3D" id="3.40.50.720">
    <property type="entry name" value="NAD(P)-binding Rossmann-like Domain"/>
    <property type="match status" value="1"/>
</dbReference>
<dbReference type="HAMAP" id="MF_00394">
    <property type="entry name" value="NAD_Glyc3P_dehydrog"/>
    <property type="match status" value="1"/>
</dbReference>
<dbReference type="InterPro" id="IPR008927">
    <property type="entry name" value="6-PGluconate_DH-like_C_sf"/>
</dbReference>
<dbReference type="InterPro" id="IPR013328">
    <property type="entry name" value="6PGD_dom2"/>
</dbReference>
<dbReference type="InterPro" id="IPR006168">
    <property type="entry name" value="G3P_DH_NAD-dep"/>
</dbReference>
<dbReference type="InterPro" id="IPR006109">
    <property type="entry name" value="G3P_DH_NAD-dep_C"/>
</dbReference>
<dbReference type="InterPro" id="IPR011128">
    <property type="entry name" value="G3P_DH_NAD-dep_N"/>
</dbReference>
<dbReference type="InterPro" id="IPR036291">
    <property type="entry name" value="NAD(P)-bd_dom_sf"/>
</dbReference>
<dbReference type="NCBIfam" id="NF000940">
    <property type="entry name" value="PRK00094.1-2"/>
    <property type="match status" value="1"/>
</dbReference>
<dbReference type="NCBIfam" id="NF000942">
    <property type="entry name" value="PRK00094.1-4"/>
    <property type="match status" value="1"/>
</dbReference>
<dbReference type="PANTHER" id="PTHR11728">
    <property type="entry name" value="GLYCEROL-3-PHOSPHATE DEHYDROGENASE"/>
    <property type="match status" value="1"/>
</dbReference>
<dbReference type="PANTHER" id="PTHR11728:SF1">
    <property type="entry name" value="GLYCEROL-3-PHOSPHATE DEHYDROGENASE [NAD(+)] 2, CHLOROPLASTIC"/>
    <property type="match status" value="1"/>
</dbReference>
<dbReference type="Pfam" id="PF07479">
    <property type="entry name" value="NAD_Gly3P_dh_C"/>
    <property type="match status" value="1"/>
</dbReference>
<dbReference type="Pfam" id="PF01210">
    <property type="entry name" value="NAD_Gly3P_dh_N"/>
    <property type="match status" value="1"/>
</dbReference>
<dbReference type="PIRSF" id="PIRSF000114">
    <property type="entry name" value="Glycerol-3-P_dh"/>
    <property type="match status" value="1"/>
</dbReference>
<dbReference type="PRINTS" id="PR00077">
    <property type="entry name" value="GPDHDRGNASE"/>
</dbReference>
<dbReference type="SUPFAM" id="SSF48179">
    <property type="entry name" value="6-phosphogluconate dehydrogenase C-terminal domain-like"/>
    <property type="match status" value="1"/>
</dbReference>
<dbReference type="SUPFAM" id="SSF51735">
    <property type="entry name" value="NAD(P)-binding Rossmann-fold domains"/>
    <property type="match status" value="1"/>
</dbReference>
<dbReference type="PROSITE" id="PS00957">
    <property type="entry name" value="NAD_G3PDH"/>
    <property type="match status" value="1"/>
</dbReference>